<protein>
    <recommendedName>
        <fullName evidence="1">Glycerol-3-phosphate dehydrogenase [NAD(P)+]</fullName>
        <ecNumber evidence="1">1.1.1.94</ecNumber>
    </recommendedName>
    <alternativeName>
        <fullName evidence="1">NAD(P)(+)-dependent glycerol-3-phosphate dehydrogenase</fullName>
    </alternativeName>
    <alternativeName>
        <fullName evidence="1">NAD(P)H-dependent dihydroxyacetone-phosphate reductase</fullName>
    </alternativeName>
</protein>
<organism>
    <name type="scientific">Shewanella amazonensis (strain ATCC BAA-1098 / SB2B)</name>
    <dbReference type="NCBI Taxonomy" id="326297"/>
    <lineage>
        <taxon>Bacteria</taxon>
        <taxon>Pseudomonadati</taxon>
        <taxon>Pseudomonadota</taxon>
        <taxon>Gammaproteobacteria</taxon>
        <taxon>Alteromonadales</taxon>
        <taxon>Shewanellaceae</taxon>
        <taxon>Shewanella</taxon>
    </lineage>
</organism>
<reference key="1">
    <citation type="submission" date="2006-12" db="EMBL/GenBank/DDBJ databases">
        <title>Complete sequence of Shewanella amazonensis SB2B.</title>
        <authorList>
            <consortium name="US DOE Joint Genome Institute"/>
            <person name="Copeland A."/>
            <person name="Lucas S."/>
            <person name="Lapidus A."/>
            <person name="Barry K."/>
            <person name="Detter J.C."/>
            <person name="Glavina del Rio T."/>
            <person name="Hammon N."/>
            <person name="Israni S."/>
            <person name="Dalin E."/>
            <person name="Tice H."/>
            <person name="Pitluck S."/>
            <person name="Munk A.C."/>
            <person name="Brettin T."/>
            <person name="Bruce D."/>
            <person name="Han C."/>
            <person name="Tapia R."/>
            <person name="Gilna P."/>
            <person name="Schmutz J."/>
            <person name="Larimer F."/>
            <person name="Land M."/>
            <person name="Hauser L."/>
            <person name="Kyrpides N."/>
            <person name="Mikhailova N."/>
            <person name="Fredrickson J."/>
            <person name="Richardson P."/>
        </authorList>
    </citation>
    <scope>NUCLEOTIDE SEQUENCE [LARGE SCALE GENOMIC DNA]</scope>
    <source>
        <strain>ATCC BAA-1098 / SB2B</strain>
    </source>
</reference>
<keyword id="KW-0963">Cytoplasm</keyword>
<keyword id="KW-0444">Lipid biosynthesis</keyword>
<keyword id="KW-0443">Lipid metabolism</keyword>
<keyword id="KW-0520">NAD</keyword>
<keyword id="KW-0521">NADP</keyword>
<keyword id="KW-0547">Nucleotide-binding</keyword>
<keyword id="KW-0560">Oxidoreductase</keyword>
<keyword id="KW-0594">Phospholipid biosynthesis</keyword>
<keyword id="KW-1208">Phospholipid metabolism</keyword>
<keyword id="KW-1185">Reference proteome</keyword>
<dbReference type="EC" id="1.1.1.94" evidence="1"/>
<dbReference type="EMBL" id="CP000507">
    <property type="protein sequence ID" value="ABL98275.1"/>
    <property type="molecule type" value="Genomic_DNA"/>
</dbReference>
<dbReference type="RefSeq" id="WP_011758186.1">
    <property type="nucleotide sequence ID" value="NC_008700.1"/>
</dbReference>
<dbReference type="SMR" id="A1S1L9"/>
<dbReference type="STRING" id="326297.Sama_0063"/>
<dbReference type="KEGG" id="saz:Sama_0063"/>
<dbReference type="eggNOG" id="COG0240">
    <property type="taxonomic scope" value="Bacteria"/>
</dbReference>
<dbReference type="HOGENOM" id="CLU_033449_0_2_6"/>
<dbReference type="OrthoDB" id="9812273at2"/>
<dbReference type="UniPathway" id="UPA00940"/>
<dbReference type="Proteomes" id="UP000009175">
    <property type="component" value="Chromosome"/>
</dbReference>
<dbReference type="GO" id="GO:0005829">
    <property type="term" value="C:cytosol"/>
    <property type="evidence" value="ECO:0007669"/>
    <property type="project" value="TreeGrafter"/>
</dbReference>
<dbReference type="GO" id="GO:0047952">
    <property type="term" value="F:glycerol-3-phosphate dehydrogenase [NAD(P)+] activity"/>
    <property type="evidence" value="ECO:0007669"/>
    <property type="project" value="UniProtKB-UniRule"/>
</dbReference>
<dbReference type="GO" id="GO:0051287">
    <property type="term" value="F:NAD binding"/>
    <property type="evidence" value="ECO:0007669"/>
    <property type="project" value="InterPro"/>
</dbReference>
<dbReference type="GO" id="GO:0005975">
    <property type="term" value="P:carbohydrate metabolic process"/>
    <property type="evidence" value="ECO:0007669"/>
    <property type="project" value="InterPro"/>
</dbReference>
<dbReference type="GO" id="GO:0046167">
    <property type="term" value="P:glycerol-3-phosphate biosynthetic process"/>
    <property type="evidence" value="ECO:0007669"/>
    <property type="project" value="UniProtKB-UniRule"/>
</dbReference>
<dbReference type="GO" id="GO:0046168">
    <property type="term" value="P:glycerol-3-phosphate catabolic process"/>
    <property type="evidence" value="ECO:0007669"/>
    <property type="project" value="InterPro"/>
</dbReference>
<dbReference type="GO" id="GO:0046474">
    <property type="term" value="P:glycerophospholipid biosynthetic process"/>
    <property type="evidence" value="ECO:0007669"/>
    <property type="project" value="TreeGrafter"/>
</dbReference>
<dbReference type="FunFam" id="1.10.1040.10:FF:000001">
    <property type="entry name" value="Glycerol-3-phosphate dehydrogenase [NAD(P)+]"/>
    <property type="match status" value="1"/>
</dbReference>
<dbReference type="FunFam" id="3.40.50.720:FF:000019">
    <property type="entry name" value="Glycerol-3-phosphate dehydrogenase [NAD(P)+]"/>
    <property type="match status" value="1"/>
</dbReference>
<dbReference type="Gene3D" id="1.10.1040.10">
    <property type="entry name" value="N-(1-d-carboxylethyl)-l-norvaline Dehydrogenase, domain 2"/>
    <property type="match status" value="1"/>
</dbReference>
<dbReference type="Gene3D" id="3.40.50.720">
    <property type="entry name" value="NAD(P)-binding Rossmann-like Domain"/>
    <property type="match status" value="1"/>
</dbReference>
<dbReference type="HAMAP" id="MF_00394">
    <property type="entry name" value="NAD_Glyc3P_dehydrog"/>
    <property type="match status" value="1"/>
</dbReference>
<dbReference type="InterPro" id="IPR008927">
    <property type="entry name" value="6-PGluconate_DH-like_C_sf"/>
</dbReference>
<dbReference type="InterPro" id="IPR013328">
    <property type="entry name" value="6PGD_dom2"/>
</dbReference>
<dbReference type="InterPro" id="IPR006168">
    <property type="entry name" value="G3P_DH_NAD-dep"/>
</dbReference>
<dbReference type="InterPro" id="IPR006109">
    <property type="entry name" value="G3P_DH_NAD-dep_C"/>
</dbReference>
<dbReference type="InterPro" id="IPR011128">
    <property type="entry name" value="G3P_DH_NAD-dep_N"/>
</dbReference>
<dbReference type="InterPro" id="IPR036291">
    <property type="entry name" value="NAD(P)-bd_dom_sf"/>
</dbReference>
<dbReference type="NCBIfam" id="NF000939">
    <property type="entry name" value="PRK00094.1-1"/>
    <property type="match status" value="1"/>
</dbReference>
<dbReference type="NCBIfam" id="NF000940">
    <property type="entry name" value="PRK00094.1-2"/>
    <property type="match status" value="1"/>
</dbReference>
<dbReference type="NCBIfam" id="NF000942">
    <property type="entry name" value="PRK00094.1-4"/>
    <property type="match status" value="1"/>
</dbReference>
<dbReference type="PANTHER" id="PTHR11728">
    <property type="entry name" value="GLYCEROL-3-PHOSPHATE DEHYDROGENASE"/>
    <property type="match status" value="1"/>
</dbReference>
<dbReference type="PANTHER" id="PTHR11728:SF1">
    <property type="entry name" value="GLYCEROL-3-PHOSPHATE DEHYDROGENASE [NAD(+)] 2, CHLOROPLASTIC"/>
    <property type="match status" value="1"/>
</dbReference>
<dbReference type="Pfam" id="PF07479">
    <property type="entry name" value="NAD_Gly3P_dh_C"/>
    <property type="match status" value="1"/>
</dbReference>
<dbReference type="Pfam" id="PF01210">
    <property type="entry name" value="NAD_Gly3P_dh_N"/>
    <property type="match status" value="1"/>
</dbReference>
<dbReference type="PIRSF" id="PIRSF000114">
    <property type="entry name" value="Glycerol-3-P_dh"/>
    <property type="match status" value="1"/>
</dbReference>
<dbReference type="PRINTS" id="PR00077">
    <property type="entry name" value="GPDHDRGNASE"/>
</dbReference>
<dbReference type="SUPFAM" id="SSF48179">
    <property type="entry name" value="6-phosphogluconate dehydrogenase C-terminal domain-like"/>
    <property type="match status" value="1"/>
</dbReference>
<dbReference type="SUPFAM" id="SSF51735">
    <property type="entry name" value="NAD(P)-binding Rossmann-fold domains"/>
    <property type="match status" value="1"/>
</dbReference>
<dbReference type="PROSITE" id="PS00957">
    <property type="entry name" value="NAD_G3PDH"/>
    <property type="match status" value="1"/>
</dbReference>
<gene>
    <name evidence="1" type="primary">gpsA</name>
    <name type="ordered locus">Sama_0063</name>
</gene>
<name>GPDA_SHEAM</name>
<comment type="function">
    <text evidence="1">Catalyzes the reduction of the glycolytic intermediate dihydroxyacetone phosphate (DHAP) to sn-glycerol 3-phosphate (G3P), the key precursor for phospholipid synthesis.</text>
</comment>
<comment type="catalytic activity">
    <reaction evidence="1">
        <text>sn-glycerol 3-phosphate + NAD(+) = dihydroxyacetone phosphate + NADH + H(+)</text>
        <dbReference type="Rhea" id="RHEA:11092"/>
        <dbReference type="ChEBI" id="CHEBI:15378"/>
        <dbReference type="ChEBI" id="CHEBI:57540"/>
        <dbReference type="ChEBI" id="CHEBI:57597"/>
        <dbReference type="ChEBI" id="CHEBI:57642"/>
        <dbReference type="ChEBI" id="CHEBI:57945"/>
        <dbReference type="EC" id="1.1.1.94"/>
    </reaction>
    <physiologicalReaction direction="right-to-left" evidence="1">
        <dbReference type="Rhea" id="RHEA:11094"/>
    </physiologicalReaction>
</comment>
<comment type="catalytic activity">
    <reaction evidence="1">
        <text>sn-glycerol 3-phosphate + NADP(+) = dihydroxyacetone phosphate + NADPH + H(+)</text>
        <dbReference type="Rhea" id="RHEA:11096"/>
        <dbReference type="ChEBI" id="CHEBI:15378"/>
        <dbReference type="ChEBI" id="CHEBI:57597"/>
        <dbReference type="ChEBI" id="CHEBI:57642"/>
        <dbReference type="ChEBI" id="CHEBI:57783"/>
        <dbReference type="ChEBI" id="CHEBI:58349"/>
        <dbReference type="EC" id="1.1.1.94"/>
    </reaction>
    <physiologicalReaction direction="right-to-left" evidence="1">
        <dbReference type="Rhea" id="RHEA:11098"/>
    </physiologicalReaction>
</comment>
<comment type="pathway">
    <text evidence="1">Membrane lipid metabolism; glycerophospholipid metabolism.</text>
</comment>
<comment type="subcellular location">
    <subcellularLocation>
        <location evidence="1">Cytoplasm</location>
    </subcellularLocation>
</comment>
<comment type="similarity">
    <text evidence="1">Belongs to the NAD-dependent glycerol-3-phosphate dehydrogenase family.</text>
</comment>
<evidence type="ECO:0000255" key="1">
    <source>
        <dbReference type="HAMAP-Rule" id="MF_00394"/>
    </source>
</evidence>
<sequence length="339" mass="35600">MKDTADITVLGAGSYGTALAISLASNGHKTLLWGHDPEHIATLSRERCNAAFLPGISFPDCLVMEADLGKALAASRNVLVVVPSHVFGDVLRQAKSLLRADARIVWATKGLEPETGRLLQDVARDALGDAFPLAVLSGPTFAKELAAGLPTAISVAGTDAGFTADLVELLHSPKRLRVYANDDFIGLQLGGAVKNVIAIGAGMSDGIGFGANARTALITRGLVELSRLGEALGAQQATFMGMAGLGDLVLTCTDNQSRNRRFGLALGKGCDVNTAQSEIGQVVEGYRNTKEVFTLAKRLGVEMPITEQIYAVLYQGKSPLDAAKELLAREKKSETAAAD</sequence>
<feature type="chain" id="PRO_1000049546" description="Glycerol-3-phosphate dehydrogenase [NAD(P)+]">
    <location>
        <begin position="1"/>
        <end position="339"/>
    </location>
</feature>
<feature type="active site" description="Proton acceptor" evidence="1">
    <location>
        <position position="194"/>
    </location>
</feature>
<feature type="binding site" evidence="1">
    <location>
        <position position="14"/>
    </location>
    <ligand>
        <name>NADPH</name>
        <dbReference type="ChEBI" id="CHEBI:57783"/>
    </ligand>
</feature>
<feature type="binding site" evidence="1">
    <location>
        <position position="15"/>
    </location>
    <ligand>
        <name>NADPH</name>
        <dbReference type="ChEBI" id="CHEBI:57783"/>
    </ligand>
</feature>
<feature type="binding site" evidence="1">
    <location>
        <position position="35"/>
    </location>
    <ligand>
        <name>NADPH</name>
        <dbReference type="ChEBI" id="CHEBI:57783"/>
    </ligand>
</feature>
<feature type="binding site" evidence="1">
    <location>
        <position position="109"/>
    </location>
    <ligand>
        <name>NADPH</name>
        <dbReference type="ChEBI" id="CHEBI:57783"/>
    </ligand>
</feature>
<feature type="binding site" evidence="1">
    <location>
        <position position="109"/>
    </location>
    <ligand>
        <name>sn-glycerol 3-phosphate</name>
        <dbReference type="ChEBI" id="CHEBI:57597"/>
    </ligand>
</feature>
<feature type="binding site" evidence="1">
    <location>
        <position position="138"/>
    </location>
    <ligand>
        <name>sn-glycerol 3-phosphate</name>
        <dbReference type="ChEBI" id="CHEBI:57597"/>
    </ligand>
</feature>
<feature type="binding site" evidence="1">
    <location>
        <position position="140"/>
    </location>
    <ligand>
        <name>sn-glycerol 3-phosphate</name>
        <dbReference type="ChEBI" id="CHEBI:57597"/>
    </ligand>
</feature>
<feature type="binding site" evidence="1">
    <location>
        <position position="142"/>
    </location>
    <ligand>
        <name>NADPH</name>
        <dbReference type="ChEBI" id="CHEBI:57783"/>
    </ligand>
</feature>
<feature type="binding site" evidence="1">
    <location>
        <position position="194"/>
    </location>
    <ligand>
        <name>sn-glycerol 3-phosphate</name>
        <dbReference type="ChEBI" id="CHEBI:57597"/>
    </ligand>
</feature>
<feature type="binding site" evidence="1">
    <location>
        <position position="247"/>
    </location>
    <ligand>
        <name>sn-glycerol 3-phosphate</name>
        <dbReference type="ChEBI" id="CHEBI:57597"/>
    </ligand>
</feature>
<feature type="binding site" evidence="1">
    <location>
        <position position="257"/>
    </location>
    <ligand>
        <name>sn-glycerol 3-phosphate</name>
        <dbReference type="ChEBI" id="CHEBI:57597"/>
    </ligand>
</feature>
<feature type="binding site" evidence="1">
    <location>
        <position position="258"/>
    </location>
    <ligand>
        <name>NADPH</name>
        <dbReference type="ChEBI" id="CHEBI:57783"/>
    </ligand>
</feature>
<feature type="binding site" evidence="1">
    <location>
        <position position="258"/>
    </location>
    <ligand>
        <name>sn-glycerol 3-phosphate</name>
        <dbReference type="ChEBI" id="CHEBI:57597"/>
    </ligand>
</feature>
<feature type="binding site" evidence="1">
    <location>
        <position position="259"/>
    </location>
    <ligand>
        <name>sn-glycerol 3-phosphate</name>
        <dbReference type="ChEBI" id="CHEBI:57597"/>
    </ligand>
</feature>
<feature type="binding site" evidence="1">
    <location>
        <position position="282"/>
    </location>
    <ligand>
        <name>NADPH</name>
        <dbReference type="ChEBI" id="CHEBI:57783"/>
    </ligand>
</feature>
<feature type="binding site" evidence="1">
    <location>
        <position position="284"/>
    </location>
    <ligand>
        <name>NADPH</name>
        <dbReference type="ChEBI" id="CHEBI:57783"/>
    </ligand>
</feature>
<proteinExistence type="inferred from homology"/>
<accession>A1S1L9</accession>